<evidence type="ECO:0000255" key="1">
    <source>
        <dbReference type="HAMAP-Rule" id="MF_00105"/>
    </source>
</evidence>
<feature type="chain" id="PRO_1000094146" description="Transcription elongation factor GreA">
    <location>
        <begin position="1"/>
        <end position="158"/>
    </location>
</feature>
<proteinExistence type="inferred from homology"/>
<protein>
    <recommendedName>
        <fullName evidence="1">Transcription elongation factor GreA</fullName>
    </recommendedName>
    <alternativeName>
        <fullName evidence="1">Transcript cleavage factor GreA</fullName>
    </alternativeName>
</protein>
<keyword id="KW-0238">DNA-binding</keyword>
<keyword id="KW-0804">Transcription</keyword>
<keyword id="KW-0805">Transcription regulation</keyword>
<comment type="function">
    <text evidence="1">Necessary for efficient RNA polymerase transcription elongation past template-encoded arresting sites. The arresting sites in DNA have the property of trapping a certain fraction of elongating RNA polymerases that pass through, resulting in locked ternary complexes. Cleavage of the nascent transcript by cleavage factors such as GreA or GreB allows the resumption of elongation from the new 3'terminus. GreA releases sequences of 2 to 3 nucleotides.</text>
</comment>
<comment type="similarity">
    <text evidence="1">Belongs to the GreA/GreB family.</text>
</comment>
<gene>
    <name evidence="1" type="primary">greA</name>
    <name type="ordered locus">ABSDF0788</name>
</gene>
<name>GREA_ACIBS</name>
<reference key="1">
    <citation type="journal article" date="2008" name="PLoS ONE">
        <title>Comparative analysis of Acinetobacters: three genomes for three lifestyles.</title>
        <authorList>
            <person name="Vallenet D."/>
            <person name="Nordmann P."/>
            <person name="Barbe V."/>
            <person name="Poirel L."/>
            <person name="Mangenot S."/>
            <person name="Bataille E."/>
            <person name="Dossat C."/>
            <person name="Gas S."/>
            <person name="Kreimeyer A."/>
            <person name="Lenoble P."/>
            <person name="Oztas S."/>
            <person name="Poulain J."/>
            <person name="Segurens B."/>
            <person name="Robert C."/>
            <person name="Abergel C."/>
            <person name="Claverie J.-M."/>
            <person name="Raoult D."/>
            <person name="Medigue C."/>
            <person name="Weissenbach J."/>
            <person name="Cruveiller S."/>
        </authorList>
    </citation>
    <scope>NUCLEOTIDE SEQUENCE [LARGE SCALE GENOMIC DNA]</scope>
    <source>
        <strain>SDF</strain>
    </source>
</reference>
<accession>B0VSL8</accession>
<sequence length="158" mass="17711">MQRYPMTPEGKIALEKELQHLKTVERPRITQAIAEAREHGDLKENAEYHAAREQQGFCEGRIQDIEGKLGTAQVIAVKDLEQNGRVVFGVTVTIENLDTEERNTYKIVGDDEADFKINKISVNSPIALGLLGKKEGDEVKITTPQGEVEYEVVSVEYL</sequence>
<organism>
    <name type="scientific">Acinetobacter baumannii (strain SDF)</name>
    <dbReference type="NCBI Taxonomy" id="509170"/>
    <lineage>
        <taxon>Bacteria</taxon>
        <taxon>Pseudomonadati</taxon>
        <taxon>Pseudomonadota</taxon>
        <taxon>Gammaproteobacteria</taxon>
        <taxon>Moraxellales</taxon>
        <taxon>Moraxellaceae</taxon>
        <taxon>Acinetobacter</taxon>
        <taxon>Acinetobacter calcoaceticus/baumannii complex</taxon>
    </lineage>
</organism>
<dbReference type="EMBL" id="CU468230">
    <property type="protein sequence ID" value="CAP00158.1"/>
    <property type="molecule type" value="Genomic_DNA"/>
</dbReference>
<dbReference type="SMR" id="B0VSL8"/>
<dbReference type="KEGG" id="abm:ABSDF0788"/>
<dbReference type="HOGENOM" id="CLU_101379_2_0_6"/>
<dbReference type="Proteomes" id="UP000001741">
    <property type="component" value="Chromosome"/>
</dbReference>
<dbReference type="GO" id="GO:0003677">
    <property type="term" value="F:DNA binding"/>
    <property type="evidence" value="ECO:0007669"/>
    <property type="project" value="UniProtKB-UniRule"/>
</dbReference>
<dbReference type="GO" id="GO:0070063">
    <property type="term" value="F:RNA polymerase binding"/>
    <property type="evidence" value="ECO:0007669"/>
    <property type="project" value="InterPro"/>
</dbReference>
<dbReference type="GO" id="GO:0006354">
    <property type="term" value="P:DNA-templated transcription elongation"/>
    <property type="evidence" value="ECO:0007669"/>
    <property type="project" value="TreeGrafter"/>
</dbReference>
<dbReference type="GO" id="GO:0032784">
    <property type="term" value="P:regulation of DNA-templated transcription elongation"/>
    <property type="evidence" value="ECO:0007669"/>
    <property type="project" value="UniProtKB-UniRule"/>
</dbReference>
<dbReference type="FunFam" id="1.10.287.180:FF:000001">
    <property type="entry name" value="Transcription elongation factor GreA"/>
    <property type="match status" value="1"/>
</dbReference>
<dbReference type="FunFam" id="3.10.50.30:FF:000001">
    <property type="entry name" value="Transcription elongation factor GreA"/>
    <property type="match status" value="1"/>
</dbReference>
<dbReference type="Gene3D" id="3.10.50.30">
    <property type="entry name" value="Transcription elongation factor, GreA/GreB, C-terminal domain"/>
    <property type="match status" value="1"/>
</dbReference>
<dbReference type="Gene3D" id="1.10.287.180">
    <property type="entry name" value="Transcription elongation factor, GreA/GreB, N-terminal domain"/>
    <property type="match status" value="1"/>
</dbReference>
<dbReference type="HAMAP" id="MF_00105">
    <property type="entry name" value="GreA_GreB"/>
    <property type="match status" value="1"/>
</dbReference>
<dbReference type="InterPro" id="IPR036953">
    <property type="entry name" value="GreA/GreB_C_sf"/>
</dbReference>
<dbReference type="InterPro" id="IPR018151">
    <property type="entry name" value="TF_GreA/GreB_CS"/>
</dbReference>
<dbReference type="InterPro" id="IPR006359">
    <property type="entry name" value="Tscrpt_elong_fac_GreA"/>
</dbReference>
<dbReference type="InterPro" id="IPR028624">
    <property type="entry name" value="Tscrpt_elong_fac_GreA/B"/>
</dbReference>
<dbReference type="InterPro" id="IPR001437">
    <property type="entry name" value="Tscrpt_elong_fac_GreA/B_C"/>
</dbReference>
<dbReference type="InterPro" id="IPR023459">
    <property type="entry name" value="Tscrpt_elong_fac_GreA/B_fam"/>
</dbReference>
<dbReference type="InterPro" id="IPR022691">
    <property type="entry name" value="Tscrpt_elong_fac_GreA/B_N"/>
</dbReference>
<dbReference type="InterPro" id="IPR036805">
    <property type="entry name" value="Tscrpt_elong_fac_GreA/B_N_sf"/>
</dbReference>
<dbReference type="NCBIfam" id="TIGR01462">
    <property type="entry name" value="greA"/>
    <property type="match status" value="1"/>
</dbReference>
<dbReference type="NCBIfam" id="NF001261">
    <property type="entry name" value="PRK00226.1-2"/>
    <property type="match status" value="1"/>
</dbReference>
<dbReference type="NCBIfam" id="NF001263">
    <property type="entry name" value="PRK00226.1-4"/>
    <property type="match status" value="1"/>
</dbReference>
<dbReference type="NCBIfam" id="NF001264">
    <property type="entry name" value="PRK00226.1-5"/>
    <property type="match status" value="1"/>
</dbReference>
<dbReference type="PANTHER" id="PTHR30437">
    <property type="entry name" value="TRANSCRIPTION ELONGATION FACTOR GREA"/>
    <property type="match status" value="1"/>
</dbReference>
<dbReference type="PANTHER" id="PTHR30437:SF4">
    <property type="entry name" value="TRANSCRIPTION ELONGATION FACTOR GREA"/>
    <property type="match status" value="1"/>
</dbReference>
<dbReference type="Pfam" id="PF01272">
    <property type="entry name" value="GreA_GreB"/>
    <property type="match status" value="1"/>
</dbReference>
<dbReference type="Pfam" id="PF03449">
    <property type="entry name" value="GreA_GreB_N"/>
    <property type="match status" value="1"/>
</dbReference>
<dbReference type="PIRSF" id="PIRSF006092">
    <property type="entry name" value="GreA_GreB"/>
    <property type="match status" value="1"/>
</dbReference>
<dbReference type="SUPFAM" id="SSF54534">
    <property type="entry name" value="FKBP-like"/>
    <property type="match status" value="1"/>
</dbReference>
<dbReference type="SUPFAM" id="SSF46557">
    <property type="entry name" value="GreA transcript cleavage protein, N-terminal domain"/>
    <property type="match status" value="1"/>
</dbReference>
<dbReference type="PROSITE" id="PS00829">
    <property type="entry name" value="GREAB_1"/>
    <property type="match status" value="1"/>
</dbReference>
<dbReference type="PROSITE" id="PS00830">
    <property type="entry name" value="GREAB_2"/>
    <property type="match status" value="1"/>
</dbReference>